<comment type="function">
    <text evidence="2">Regulates dendritic and spine growth and synaptic transmission.</text>
</comment>
<comment type="subcellular location">
    <subcellularLocation>
        <location evidence="2">Nucleus</location>
        <location evidence="2">Nucleolus</location>
    </subcellularLocation>
    <subcellularLocation>
        <location evidence="1">Chromosome</location>
    </subcellularLocation>
    <text evidence="1 2">Cell-permeable protein (By similarity). Localizes at the chromosome periphery during mitosis (By similarity).</text>
</comment>
<comment type="similarity">
    <text evidence="4">Belongs to the learning-associated protein family.</text>
</comment>
<gene>
    <name type="primary">llph</name>
    <name type="ORF">si:dkey-9a20.7</name>
    <name type="ORF">zgc:123180</name>
</gene>
<keyword id="KW-0158">Chromosome</keyword>
<keyword id="KW-0539">Nucleus</keyword>
<keyword id="KW-1185">Reference proteome</keyword>
<name>LLPH_DANRE</name>
<sequence>MAKSLRSKWRRKMRAEKRKKVAPKELARLKSALGQGEKGEISMKDVAEIATVVPPEKVKQKPADVDMQEEEADGGKMDLDTKRNKKTMLDEHGRYPVWMNQRQAKKLKAKRVGKNGKPKPKKRLAW</sequence>
<dbReference type="EMBL" id="BX537162">
    <property type="protein sequence ID" value="CAK11290.1"/>
    <property type="molecule type" value="Genomic_DNA"/>
</dbReference>
<dbReference type="EMBL" id="BC107822">
    <property type="protein sequence ID" value="AAI07823.1"/>
    <property type="molecule type" value="mRNA"/>
</dbReference>
<dbReference type="RefSeq" id="NP_001032184.1">
    <property type="nucleotide sequence ID" value="NM_001037107.1"/>
</dbReference>
<dbReference type="RefSeq" id="NP_001096610.1">
    <property type="nucleotide sequence ID" value="NM_001103140.2"/>
</dbReference>
<dbReference type="SMR" id="Q3B748"/>
<dbReference type="FunCoup" id="Q3B748">
    <property type="interactions" value="1015"/>
</dbReference>
<dbReference type="STRING" id="7955.ENSDARP00000072173"/>
<dbReference type="PaxDb" id="7955-ENSDARP00000072173"/>
<dbReference type="Ensembl" id="ENSDART00000077707">
    <property type="protein sequence ID" value="ENSDARP00000072173"/>
    <property type="gene ID" value="ENSDARG00000055360"/>
</dbReference>
<dbReference type="GeneID" id="100003313"/>
<dbReference type="KEGG" id="dre:100003313"/>
<dbReference type="AGR" id="ZFIN:ZDB-GENE-051030-30"/>
<dbReference type="CTD" id="84298"/>
<dbReference type="ZFIN" id="ZDB-GENE-051030-30">
    <property type="gene designation" value="llph"/>
</dbReference>
<dbReference type="eggNOG" id="KOG4811">
    <property type="taxonomic scope" value="Eukaryota"/>
</dbReference>
<dbReference type="HOGENOM" id="CLU_134502_0_0_1"/>
<dbReference type="InParanoid" id="Q3B748"/>
<dbReference type="OMA" id="YGNYPVW"/>
<dbReference type="OrthoDB" id="6257894at2759"/>
<dbReference type="PhylomeDB" id="Q3B748"/>
<dbReference type="TreeFam" id="TF314654"/>
<dbReference type="PRO" id="PR:Q3B748"/>
<dbReference type="Proteomes" id="UP000000437">
    <property type="component" value="Chromosome 4"/>
</dbReference>
<dbReference type="Bgee" id="ENSDARG00000055360">
    <property type="expression patterns" value="Expressed in gastrula and 34 other cell types or tissues"/>
</dbReference>
<dbReference type="ExpressionAtlas" id="Q3B748">
    <property type="expression patterns" value="baseline and differential"/>
</dbReference>
<dbReference type="GO" id="GO:0005694">
    <property type="term" value="C:chromosome"/>
    <property type="evidence" value="ECO:0000250"/>
    <property type="project" value="UniProtKB"/>
</dbReference>
<dbReference type="GO" id="GO:0005730">
    <property type="term" value="C:nucleolus"/>
    <property type="evidence" value="ECO:0000250"/>
    <property type="project" value="UniProtKB"/>
</dbReference>
<dbReference type="GO" id="GO:0001099">
    <property type="term" value="F:basal RNA polymerase II transcription machinery binding"/>
    <property type="evidence" value="ECO:0000250"/>
    <property type="project" value="UniProtKB"/>
</dbReference>
<dbReference type="GO" id="GO:0097484">
    <property type="term" value="P:dendrite extension"/>
    <property type="evidence" value="ECO:0000250"/>
    <property type="project" value="UniProtKB"/>
</dbReference>
<dbReference type="GO" id="GO:0060999">
    <property type="term" value="P:positive regulation of dendritic spine development"/>
    <property type="evidence" value="ECO:0000250"/>
    <property type="project" value="UniProtKB"/>
</dbReference>
<dbReference type="InterPro" id="IPR018784">
    <property type="entry name" value="LLPH-like"/>
</dbReference>
<dbReference type="PANTHER" id="PTHR34253">
    <property type="entry name" value="PROTEIN LLP HOMOLOG"/>
    <property type="match status" value="1"/>
</dbReference>
<dbReference type="PANTHER" id="PTHR34253:SF1">
    <property type="entry name" value="PROTEIN LLP HOMOLOG"/>
    <property type="match status" value="1"/>
</dbReference>
<dbReference type="Pfam" id="PF10169">
    <property type="entry name" value="LLPH"/>
    <property type="match status" value="1"/>
</dbReference>
<feature type="chain" id="PRO_0000274349" description="Protein LLP homolog">
    <location>
        <begin position="1"/>
        <end position="126"/>
    </location>
</feature>
<feature type="region of interest" description="Disordered" evidence="3">
    <location>
        <begin position="1"/>
        <end position="22"/>
    </location>
</feature>
<feature type="region of interest" description="Disordered" evidence="3">
    <location>
        <begin position="53"/>
        <end position="126"/>
    </location>
</feature>
<feature type="compositionally biased region" description="Basic residues" evidence="3">
    <location>
        <begin position="1"/>
        <end position="21"/>
    </location>
</feature>
<feature type="compositionally biased region" description="Basic and acidic residues" evidence="3">
    <location>
        <begin position="73"/>
        <end position="94"/>
    </location>
</feature>
<feature type="compositionally biased region" description="Basic residues" evidence="3">
    <location>
        <begin position="103"/>
        <end position="126"/>
    </location>
</feature>
<proteinExistence type="evidence at transcript level"/>
<accession>Q3B748</accession>
<evidence type="ECO:0000250" key="1">
    <source>
        <dbReference type="UniProtKB" id="Q9BRT6"/>
    </source>
</evidence>
<evidence type="ECO:0000250" key="2">
    <source>
        <dbReference type="UniProtKB" id="Q9D945"/>
    </source>
</evidence>
<evidence type="ECO:0000256" key="3">
    <source>
        <dbReference type="SAM" id="MobiDB-lite"/>
    </source>
</evidence>
<evidence type="ECO:0000305" key="4"/>
<reference key="1">
    <citation type="journal article" date="2013" name="Nature">
        <title>The zebrafish reference genome sequence and its relationship to the human genome.</title>
        <authorList>
            <person name="Howe K."/>
            <person name="Clark M.D."/>
            <person name="Torroja C.F."/>
            <person name="Torrance J."/>
            <person name="Berthelot C."/>
            <person name="Muffato M."/>
            <person name="Collins J.E."/>
            <person name="Humphray S."/>
            <person name="McLaren K."/>
            <person name="Matthews L."/>
            <person name="McLaren S."/>
            <person name="Sealy I."/>
            <person name="Caccamo M."/>
            <person name="Churcher C."/>
            <person name="Scott C."/>
            <person name="Barrett J.C."/>
            <person name="Koch R."/>
            <person name="Rauch G.J."/>
            <person name="White S."/>
            <person name="Chow W."/>
            <person name="Kilian B."/>
            <person name="Quintais L.T."/>
            <person name="Guerra-Assuncao J.A."/>
            <person name="Zhou Y."/>
            <person name="Gu Y."/>
            <person name="Yen J."/>
            <person name="Vogel J.H."/>
            <person name="Eyre T."/>
            <person name="Redmond S."/>
            <person name="Banerjee R."/>
            <person name="Chi J."/>
            <person name="Fu B."/>
            <person name="Langley E."/>
            <person name="Maguire S.F."/>
            <person name="Laird G.K."/>
            <person name="Lloyd D."/>
            <person name="Kenyon E."/>
            <person name="Donaldson S."/>
            <person name="Sehra H."/>
            <person name="Almeida-King J."/>
            <person name="Loveland J."/>
            <person name="Trevanion S."/>
            <person name="Jones M."/>
            <person name="Quail M."/>
            <person name="Willey D."/>
            <person name="Hunt A."/>
            <person name="Burton J."/>
            <person name="Sims S."/>
            <person name="McLay K."/>
            <person name="Plumb B."/>
            <person name="Davis J."/>
            <person name="Clee C."/>
            <person name="Oliver K."/>
            <person name="Clark R."/>
            <person name="Riddle C."/>
            <person name="Elliot D."/>
            <person name="Threadgold G."/>
            <person name="Harden G."/>
            <person name="Ware D."/>
            <person name="Begum S."/>
            <person name="Mortimore B."/>
            <person name="Kerry G."/>
            <person name="Heath P."/>
            <person name="Phillimore B."/>
            <person name="Tracey A."/>
            <person name="Corby N."/>
            <person name="Dunn M."/>
            <person name="Johnson C."/>
            <person name="Wood J."/>
            <person name="Clark S."/>
            <person name="Pelan S."/>
            <person name="Griffiths G."/>
            <person name="Smith M."/>
            <person name="Glithero R."/>
            <person name="Howden P."/>
            <person name="Barker N."/>
            <person name="Lloyd C."/>
            <person name="Stevens C."/>
            <person name="Harley J."/>
            <person name="Holt K."/>
            <person name="Panagiotidis G."/>
            <person name="Lovell J."/>
            <person name="Beasley H."/>
            <person name="Henderson C."/>
            <person name="Gordon D."/>
            <person name="Auger K."/>
            <person name="Wright D."/>
            <person name="Collins J."/>
            <person name="Raisen C."/>
            <person name="Dyer L."/>
            <person name="Leung K."/>
            <person name="Robertson L."/>
            <person name="Ambridge K."/>
            <person name="Leongamornlert D."/>
            <person name="McGuire S."/>
            <person name="Gilderthorp R."/>
            <person name="Griffiths C."/>
            <person name="Manthravadi D."/>
            <person name="Nichol S."/>
            <person name="Barker G."/>
            <person name="Whitehead S."/>
            <person name="Kay M."/>
            <person name="Brown J."/>
            <person name="Murnane C."/>
            <person name="Gray E."/>
            <person name="Humphries M."/>
            <person name="Sycamore N."/>
            <person name="Barker D."/>
            <person name="Saunders D."/>
            <person name="Wallis J."/>
            <person name="Babbage A."/>
            <person name="Hammond S."/>
            <person name="Mashreghi-Mohammadi M."/>
            <person name="Barr L."/>
            <person name="Martin S."/>
            <person name="Wray P."/>
            <person name="Ellington A."/>
            <person name="Matthews N."/>
            <person name="Ellwood M."/>
            <person name="Woodmansey R."/>
            <person name="Clark G."/>
            <person name="Cooper J."/>
            <person name="Tromans A."/>
            <person name="Grafham D."/>
            <person name="Skuce C."/>
            <person name="Pandian R."/>
            <person name="Andrews R."/>
            <person name="Harrison E."/>
            <person name="Kimberley A."/>
            <person name="Garnett J."/>
            <person name="Fosker N."/>
            <person name="Hall R."/>
            <person name="Garner P."/>
            <person name="Kelly D."/>
            <person name="Bird C."/>
            <person name="Palmer S."/>
            <person name="Gehring I."/>
            <person name="Berger A."/>
            <person name="Dooley C.M."/>
            <person name="Ersan-Urun Z."/>
            <person name="Eser C."/>
            <person name="Geiger H."/>
            <person name="Geisler M."/>
            <person name="Karotki L."/>
            <person name="Kirn A."/>
            <person name="Konantz J."/>
            <person name="Konantz M."/>
            <person name="Oberlander M."/>
            <person name="Rudolph-Geiger S."/>
            <person name="Teucke M."/>
            <person name="Lanz C."/>
            <person name="Raddatz G."/>
            <person name="Osoegawa K."/>
            <person name="Zhu B."/>
            <person name="Rapp A."/>
            <person name="Widaa S."/>
            <person name="Langford C."/>
            <person name="Yang F."/>
            <person name="Schuster S.C."/>
            <person name="Carter N.P."/>
            <person name="Harrow J."/>
            <person name="Ning Z."/>
            <person name="Herrero J."/>
            <person name="Searle S.M."/>
            <person name="Enright A."/>
            <person name="Geisler R."/>
            <person name="Plasterk R.H."/>
            <person name="Lee C."/>
            <person name="Westerfield M."/>
            <person name="de Jong P.J."/>
            <person name="Zon L.I."/>
            <person name="Postlethwait J.H."/>
            <person name="Nusslein-Volhard C."/>
            <person name="Hubbard T.J."/>
            <person name="Roest Crollius H."/>
            <person name="Rogers J."/>
            <person name="Stemple D.L."/>
        </authorList>
    </citation>
    <scope>NUCLEOTIDE SEQUENCE [LARGE SCALE GENOMIC DNA]</scope>
    <source>
        <strain>Tuebingen</strain>
    </source>
</reference>
<reference key="2">
    <citation type="submission" date="2005-10" db="EMBL/GenBank/DDBJ databases">
        <authorList>
            <consortium name="NIH - Zebrafish Gene Collection (ZGC) project"/>
        </authorList>
    </citation>
    <scope>NUCLEOTIDE SEQUENCE [LARGE SCALE MRNA]</scope>
    <source>
        <strain>AB</strain>
        <tissue>Liver</tissue>
    </source>
</reference>
<protein>
    <recommendedName>
        <fullName>Protein LLP homolog</fullName>
    </recommendedName>
    <alternativeName>
        <fullName>Protein LAPS18-like</fullName>
    </alternativeName>
</protein>
<organism>
    <name type="scientific">Danio rerio</name>
    <name type="common">Zebrafish</name>
    <name type="synonym">Brachydanio rerio</name>
    <dbReference type="NCBI Taxonomy" id="7955"/>
    <lineage>
        <taxon>Eukaryota</taxon>
        <taxon>Metazoa</taxon>
        <taxon>Chordata</taxon>
        <taxon>Craniata</taxon>
        <taxon>Vertebrata</taxon>
        <taxon>Euteleostomi</taxon>
        <taxon>Actinopterygii</taxon>
        <taxon>Neopterygii</taxon>
        <taxon>Teleostei</taxon>
        <taxon>Ostariophysi</taxon>
        <taxon>Cypriniformes</taxon>
        <taxon>Danionidae</taxon>
        <taxon>Danioninae</taxon>
        <taxon>Danio</taxon>
    </lineage>
</organism>